<protein>
    <recommendedName>
        <fullName>HTH-type transcriptional activator AllS</fullName>
    </recommendedName>
</protein>
<sequence length="308" mass="34526">MFDPETLRTFIAVAETGSFSKAAERLCKTTATISYRIKLLEENTGVALFFRTTRSVTLTAAGEHLLCQARDWLGWLESMPSELQQVNDGVERQVNIVINNLLYNPQAVARLLAWLNERYPFTQFHISRQIYMGVWDSLLYEGFSLAIGVTGTEALANTFSLDPLGSVQWRFVMAADHPLANVEEPLTEAQLRRFPAVNIEDSARTLTKRVAWRLPGQKEIIVPDMETKIAAHLAGVGIGFLPKSLCQSMLDNQQLVSRVIPTMRPPSPLSLAWRKFGSGKAVEDIVTLFTQRRPEISGFLEIFGNPRS</sequence>
<proteinExistence type="inferred from homology"/>
<evidence type="ECO:0000250" key="1"/>
<evidence type="ECO:0000255" key="2">
    <source>
        <dbReference type="PROSITE-ProRule" id="PRU00253"/>
    </source>
</evidence>
<evidence type="ECO:0000305" key="3"/>
<keyword id="KW-0010">Activator</keyword>
<keyword id="KW-0238">DNA-binding</keyword>
<keyword id="KW-0804">Transcription</keyword>
<keyword id="KW-0805">Transcription regulation</keyword>
<feature type="chain" id="PRO_0000312806" description="HTH-type transcriptional activator AllS">
    <location>
        <begin position="1"/>
        <end position="308"/>
    </location>
</feature>
<feature type="domain" description="HTH lysR-type" evidence="2">
    <location>
        <begin position="2"/>
        <end position="59"/>
    </location>
</feature>
<feature type="DNA-binding region" description="H-T-H motif" evidence="2">
    <location>
        <begin position="19"/>
        <end position="38"/>
    </location>
</feature>
<reference key="1">
    <citation type="journal article" date="2006" name="Proc. Natl. Acad. Sci. U.S.A.">
        <title>Identification of genes subject to positive selection in uropathogenic strains of Escherichia coli: a comparative genomics approach.</title>
        <authorList>
            <person name="Chen S.L."/>
            <person name="Hung C.-S."/>
            <person name="Xu J."/>
            <person name="Reigstad C.S."/>
            <person name="Magrini V."/>
            <person name="Sabo A."/>
            <person name="Blasiar D."/>
            <person name="Bieri T."/>
            <person name="Meyer R.R."/>
            <person name="Ozersky P."/>
            <person name="Armstrong J.R."/>
            <person name="Fulton R.S."/>
            <person name="Latreille J.P."/>
            <person name="Spieth J."/>
            <person name="Hooton T.M."/>
            <person name="Mardis E.R."/>
            <person name="Hultgren S.J."/>
            <person name="Gordon J.I."/>
        </authorList>
    </citation>
    <scope>NUCLEOTIDE SEQUENCE [LARGE SCALE GENOMIC DNA]</scope>
    <source>
        <strain>UTI89 / UPEC</strain>
    </source>
</reference>
<accession>Q1RF30</accession>
<name>ALLS_ECOUT</name>
<comment type="function">
    <text evidence="1">Positive regulator essential for the expression of allD operon. Binds to the allD promoter (By similarity).</text>
</comment>
<comment type="similarity">
    <text evidence="3">Belongs to the LysR transcriptional regulatory family.</text>
</comment>
<organism>
    <name type="scientific">Escherichia coli (strain UTI89 / UPEC)</name>
    <dbReference type="NCBI Taxonomy" id="364106"/>
    <lineage>
        <taxon>Bacteria</taxon>
        <taxon>Pseudomonadati</taxon>
        <taxon>Pseudomonadota</taxon>
        <taxon>Gammaproteobacteria</taxon>
        <taxon>Enterobacterales</taxon>
        <taxon>Enterobacteriaceae</taxon>
        <taxon>Escherichia</taxon>
    </lineage>
</organism>
<dbReference type="EMBL" id="CP000243">
    <property type="protein sequence ID" value="ABE06034.1"/>
    <property type="molecule type" value="Genomic_DNA"/>
</dbReference>
<dbReference type="RefSeq" id="WP_000460112.1">
    <property type="nucleotide sequence ID" value="NZ_CP064825.1"/>
</dbReference>
<dbReference type="SMR" id="Q1RF30"/>
<dbReference type="KEGG" id="eci:UTI89_C0533"/>
<dbReference type="HOGENOM" id="CLU_039613_35_1_6"/>
<dbReference type="Proteomes" id="UP000001952">
    <property type="component" value="Chromosome"/>
</dbReference>
<dbReference type="GO" id="GO:0003677">
    <property type="term" value="F:DNA binding"/>
    <property type="evidence" value="ECO:0007669"/>
    <property type="project" value="UniProtKB-KW"/>
</dbReference>
<dbReference type="GO" id="GO:0003700">
    <property type="term" value="F:DNA-binding transcription factor activity"/>
    <property type="evidence" value="ECO:0007669"/>
    <property type="project" value="InterPro"/>
</dbReference>
<dbReference type="FunFam" id="3.40.190.290:FF:000005">
    <property type="entry name" value="HTH-type transcriptional activator AllS"/>
    <property type="match status" value="1"/>
</dbReference>
<dbReference type="FunFam" id="1.10.10.10:FF:000001">
    <property type="entry name" value="LysR family transcriptional regulator"/>
    <property type="match status" value="1"/>
</dbReference>
<dbReference type="Gene3D" id="3.40.190.290">
    <property type="match status" value="1"/>
</dbReference>
<dbReference type="Gene3D" id="1.10.10.10">
    <property type="entry name" value="Winged helix-like DNA-binding domain superfamily/Winged helix DNA-binding domain"/>
    <property type="match status" value="1"/>
</dbReference>
<dbReference type="InterPro" id="IPR050176">
    <property type="entry name" value="LTTR"/>
</dbReference>
<dbReference type="InterPro" id="IPR005119">
    <property type="entry name" value="LysR_subst-bd"/>
</dbReference>
<dbReference type="InterPro" id="IPR000847">
    <property type="entry name" value="Tscrpt_reg_HTH_LysR"/>
</dbReference>
<dbReference type="InterPro" id="IPR036388">
    <property type="entry name" value="WH-like_DNA-bd_sf"/>
</dbReference>
<dbReference type="InterPro" id="IPR036390">
    <property type="entry name" value="WH_DNA-bd_sf"/>
</dbReference>
<dbReference type="NCBIfam" id="NF007501">
    <property type="entry name" value="PRK10094.1"/>
    <property type="match status" value="1"/>
</dbReference>
<dbReference type="PANTHER" id="PTHR30579:SF0">
    <property type="entry name" value="HTH-TYPE TRANSCRIPTIONAL ACTIVATOR ALLS"/>
    <property type="match status" value="1"/>
</dbReference>
<dbReference type="PANTHER" id="PTHR30579">
    <property type="entry name" value="TRANSCRIPTIONAL REGULATOR"/>
    <property type="match status" value="1"/>
</dbReference>
<dbReference type="Pfam" id="PF00126">
    <property type="entry name" value="HTH_1"/>
    <property type="match status" value="1"/>
</dbReference>
<dbReference type="Pfam" id="PF03466">
    <property type="entry name" value="LysR_substrate"/>
    <property type="match status" value="1"/>
</dbReference>
<dbReference type="SUPFAM" id="SSF53850">
    <property type="entry name" value="Periplasmic binding protein-like II"/>
    <property type="match status" value="1"/>
</dbReference>
<dbReference type="SUPFAM" id="SSF46785">
    <property type="entry name" value="Winged helix' DNA-binding domain"/>
    <property type="match status" value="1"/>
</dbReference>
<dbReference type="PROSITE" id="PS50931">
    <property type="entry name" value="HTH_LYSR"/>
    <property type="match status" value="1"/>
</dbReference>
<gene>
    <name type="primary">allS</name>
    <name type="ordered locus">UTI89_C0533</name>
</gene>